<dbReference type="EMBL" id="AK129346">
    <property type="protein sequence ID" value="BAC98156.1"/>
    <property type="status" value="ALT_INIT"/>
    <property type="molecule type" value="mRNA"/>
</dbReference>
<dbReference type="EMBL" id="AK030015">
    <property type="protein sequence ID" value="BAC26735.1"/>
    <property type="molecule type" value="mRNA"/>
</dbReference>
<dbReference type="EMBL" id="AK162847">
    <property type="protein sequence ID" value="BAE37080.1"/>
    <property type="molecule type" value="mRNA"/>
</dbReference>
<dbReference type="EMBL" id="BC099949">
    <property type="protein sequence ID" value="AAH99949.1"/>
    <property type="molecule type" value="mRNA"/>
</dbReference>
<dbReference type="EMBL" id="BC100572">
    <property type="protein sequence ID" value="AAI00573.1"/>
    <property type="molecule type" value="mRNA"/>
</dbReference>
<dbReference type="EMBL" id="BC100573">
    <property type="protein sequence ID" value="AAI00574.1"/>
    <property type="molecule type" value="mRNA"/>
</dbReference>
<dbReference type="EMBL" id="BC138237">
    <property type="protein sequence ID" value="AAI38238.1"/>
    <property type="molecule type" value="mRNA"/>
</dbReference>
<dbReference type="EMBL" id="BC138238">
    <property type="protein sequence ID" value="AAI38239.1"/>
    <property type="molecule type" value="mRNA"/>
</dbReference>
<dbReference type="CCDS" id="CCDS40336.1">
    <molecule id="Q499E5-3"/>
</dbReference>
<dbReference type="CCDS" id="CCDS52548.1">
    <molecule id="Q499E5-1"/>
</dbReference>
<dbReference type="CCDS" id="CCDS85535.1">
    <molecule id="Q499E5-2"/>
</dbReference>
<dbReference type="RefSeq" id="NP_001107783.1">
    <molecule id="Q499E5-1"/>
    <property type="nucleotide sequence ID" value="NM_001114311.1"/>
</dbReference>
<dbReference type="RefSeq" id="NP_001273305.1">
    <molecule id="Q499E5-2"/>
    <property type="nucleotide sequence ID" value="NM_001286376.1"/>
</dbReference>
<dbReference type="RefSeq" id="NP_780371.3">
    <molecule id="Q499E5-3"/>
    <property type="nucleotide sequence ID" value="NM_175162.4"/>
</dbReference>
<dbReference type="RefSeq" id="XP_011240539.1">
    <molecule id="Q499E5-3"/>
    <property type="nucleotide sequence ID" value="XM_011242237.3"/>
</dbReference>
<dbReference type="RefSeq" id="XP_036010187.1">
    <molecule id="Q499E5-3"/>
    <property type="nucleotide sequence ID" value="XM_036154294.1"/>
</dbReference>
<dbReference type="BioGRID" id="214451">
    <property type="interactions" value="6"/>
</dbReference>
<dbReference type="FunCoup" id="Q499E5">
    <property type="interactions" value="2650"/>
</dbReference>
<dbReference type="IntAct" id="Q499E5">
    <property type="interactions" value="1"/>
</dbReference>
<dbReference type="STRING" id="10090.ENSMUSP00000078190"/>
<dbReference type="GlyGen" id="Q499E5">
    <property type="glycosylation" value="4 sites, 1 O-linked glycan (1 site)"/>
</dbReference>
<dbReference type="iPTMnet" id="Q499E5"/>
<dbReference type="PhosphoSitePlus" id="Q499E5"/>
<dbReference type="PaxDb" id="10090-ENSMUSP00000078190"/>
<dbReference type="ProteomicsDB" id="258643">
    <molecule id="Q499E5-1"/>
</dbReference>
<dbReference type="ProteomicsDB" id="258644">
    <molecule id="Q499E5-2"/>
</dbReference>
<dbReference type="ProteomicsDB" id="258645">
    <molecule id="Q499E5-3"/>
</dbReference>
<dbReference type="Antibodypedia" id="56777">
    <property type="antibodies" value="54 antibodies from 21 providers"/>
</dbReference>
<dbReference type="DNASU" id="71069"/>
<dbReference type="Ensembl" id="ENSMUST00000079195.6">
    <molecule id="Q499E5-1"/>
    <property type="protein sequence ID" value="ENSMUSP00000078190.6"/>
    <property type="gene ID" value="ENSMUSG00000038143.17"/>
</dbReference>
<dbReference type="Ensembl" id="ENSMUST00000110367.10">
    <molecule id="Q499E5-3"/>
    <property type="protein sequence ID" value="ENSMUSP00000105996.3"/>
    <property type="gene ID" value="ENSMUSG00000038143.17"/>
</dbReference>
<dbReference type="Ensembl" id="ENSMUST00000210030.2">
    <molecule id="Q499E5-3"/>
    <property type="protein sequence ID" value="ENSMUSP00000147281.2"/>
    <property type="gene ID" value="ENSMUSG00000038143.17"/>
</dbReference>
<dbReference type="Ensembl" id="ENSMUST00000211737.2">
    <molecule id="Q499E5-2"/>
    <property type="protein sequence ID" value="ENSMUSP00000147477.2"/>
    <property type="gene ID" value="ENSMUSG00000038143.17"/>
</dbReference>
<dbReference type="GeneID" id="71069"/>
<dbReference type="KEGG" id="mmu:71069"/>
<dbReference type="UCSC" id="uc009lqv.2">
    <molecule id="Q499E5-3"/>
    <property type="organism name" value="mouse"/>
</dbReference>
<dbReference type="UCSC" id="uc009lqw.2">
    <molecule id="Q499E5-2"/>
    <property type="organism name" value="mouse"/>
</dbReference>
<dbReference type="UCSC" id="uc009lqx.2">
    <molecule id="Q499E5-1"/>
    <property type="organism name" value="mouse"/>
</dbReference>
<dbReference type="AGR" id="MGI:1918319"/>
<dbReference type="CTD" id="56977"/>
<dbReference type="MGI" id="MGI:1918319">
    <property type="gene designation" value="Stox2"/>
</dbReference>
<dbReference type="VEuPathDB" id="HostDB:ENSMUSG00000038143"/>
<dbReference type="eggNOG" id="KOG3897">
    <property type="taxonomic scope" value="Eukaryota"/>
</dbReference>
<dbReference type="GeneTree" id="ENSGT00520000055589"/>
<dbReference type="HOGENOM" id="CLU_013650_0_0_1"/>
<dbReference type="InParanoid" id="Q499E5"/>
<dbReference type="OMA" id="SGCIRER"/>
<dbReference type="PhylomeDB" id="Q499E5"/>
<dbReference type="TreeFam" id="TF331863"/>
<dbReference type="BioGRID-ORCS" id="71069">
    <property type="hits" value="2 hits in 78 CRISPR screens"/>
</dbReference>
<dbReference type="ChiTaRS" id="Stox2">
    <property type="organism name" value="mouse"/>
</dbReference>
<dbReference type="PRO" id="PR:Q499E5"/>
<dbReference type="Proteomes" id="UP000000589">
    <property type="component" value="Chromosome 8"/>
</dbReference>
<dbReference type="RNAct" id="Q499E5">
    <property type="molecule type" value="protein"/>
</dbReference>
<dbReference type="Bgee" id="ENSMUSG00000038143">
    <property type="expression patterns" value="Expressed in rostral migratory stream and 223 other cell types or tissues"/>
</dbReference>
<dbReference type="ExpressionAtlas" id="Q499E5">
    <property type="expression patterns" value="baseline and differential"/>
</dbReference>
<dbReference type="GO" id="GO:0009792">
    <property type="term" value="P:embryo development ending in birth or egg hatching"/>
    <property type="evidence" value="ECO:0000250"/>
    <property type="project" value="UniProtKB"/>
</dbReference>
<dbReference type="GO" id="GO:0001893">
    <property type="term" value="P:maternal placenta development"/>
    <property type="evidence" value="ECO:0000250"/>
    <property type="project" value="UniProtKB"/>
</dbReference>
<dbReference type="GO" id="GO:0006357">
    <property type="term" value="P:regulation of transcription by RNA polymerase II"/>
    <property type="evidence" value="ECO:0007669"/>
    <property type="project" value="InterPro"/>
</dbReference>
<dbReference type="GO" id="GO:0009617">
    <property type="term" value="P:response to bacterium"/>
    <property type="evidence" value="ECO:0000270"/>
    <property type="project" value="MGI"/>
</dbReference>
<dbReference type="InterPro" id="IPR019391">
    <property type="entry name" value="Storkhead-box_winged-helix"/>
</dbReference>
<dbReference type="InterPro" id="IPR040126">
    <property type="entry name" value="STOX1/2"/>
</dbReference>
<dbReference type="PANTHER" id="PTHR22437:SF2">
    <property type="entry name" value="STORKHEAD-BOX PROTEIN 2"/>
    <property type="match status" value="1"/>
</dbReference>
<dbReference type="PANTHER" id="PTHR22437">
    <property type="entry name" value="WINGED HELIX DOMAIN-CONTAINING PROTEIN"/>
    <property type="match status" value="1"/>
</dbReference>
<dbReference type="Pfam" id="PF10264">
    <property type="entry name" value="Stork_head"/>
    <property type="match status" value="1"/>
</dbReference>
<gene>
    <name type="primary">Stox2</name>
    <name type="synonym">Kiaa1392</name>
</gene>
<organism>
    <name type="scientific">Mus musculus</name>
    <name type="common">Mouse</name>
    <dbReference type="NCBI Taxonomy" id="10090"/>
    <lineage>
        <taxon>Eukaryota</taxon>
        <taxon>Metazoa</taxon>
        <taxon>Chordata</taxon>
        <taxon>Craniata</taxon>
        <taxon>Vertebrata</taxon>
        <taxon>Euteleostomi</taxon>
        <taxon>Mammalia</taxon>
        <taxon>Eutheria</taxon>
        <taxon>Euarchontoglires</taxon>
        <taxon>Glires</taxon>
        <taxon>Rodentia</taxon>
        <taxon>Myomorpha</taxon>
        <taxon>Muroidea</taxon>
        <taxon>Muridae</taxon>
        <taxon>Murinae</taxon>
        <taxon>Mus</taxon>
        <taxon>Mus</taxon>
    </lineage>
</organism>
<proteinExistence type="evidence at transcript level"/>
<feature type="chain" id="PRO_0000313631" description="Storkhead-box protein 2">
    <location>
        <begin position="1"/>
        <end position="926"/>
    </location>
</feature>
<feature type="region of interest" description="Disordered" evidence="1">
    <location>
        <begin position="1"/>
        <end position="32"/>
    </location>
</feature>
<feature type="region of interest" description="Disordered" evidence="1">
    <location>
        <begin position="338"/>
        <end position="393"/>
    </location>
</feature>
<feature type="region of interest" description="Disordered" evidence="1">
    <location>
        <begin position="452"/>
        <end position="529"/>
    </location>
</feature>
<feature type="region of interest" description="Disordered" evidence="1">
    <location>
        <begin position="564"/>
        <end position="586"/>
    </location>
</feature>
<feature type="region of interest" description="Disordered" evidence="1">
    <location>
        <begin position="633"/>
        <end position="693"/>
    </location>
</feature>
<feature type="region of interest" description="Disordered" evidence="1">
    <location>
        <begin position="723"/>
        <end position="802"/>
    </location>
</feature>
<feature type="region of interest" description="Disordered" evidence="1">
    <location>
        <begin position="823"/>
        <end position="926"/>
    </location>
</feature>
<feature type="compositionally biased region" description="Basic and acidic residues" evidence="1">
    <location>
        <begin position="18"/>
        <end position="32"/>
    </location>
</feature>
<feature type="compositionally biased region" description="Basic residues" evidence="1">
    <location>
        <begin position="353"/>
        <end position="378"/>
    </location>
</feature>
<feature type="compositionally biased region" description="Basic and acidic residues" evidence="1">
    <location>
        <begin position="379"/>
        <end position="393"/>
    </location>
</feature>
<feature type="compositionally biased region" description="Basic residues" evidence="1">
    <location>
        <begin position="463"/>
        <end position="472"/>
    </location>
</feature>
<feature type="compositionally biased region" description="Basic and acidic residues" evidence="1">
    <location>
        <begin position="473"/>
        <end position="495"/>
    </location>
</feature>
<feature type="compositionally biased region" description="Polar residues" evidence="1">
    <location>
        <begin position="518"/>
        <end position="529"/>
    </location>
</feature>
<feature type="compositionally biased region" description="Basic and acidic residues" evidence="1">
    <location>
        <begin position="633"/>
        <end position="658"/>
    </location>
</feature>
<feature type="compositionally biased region" description="Basic and acidic residues" evidence="1">
    <location>
        <begin position="684"/>
        <end position="693"/>
    </location>
</feature>
<feature type="compositionally biased region" description="Polar residues" evidence="1">
    <location>
        <begin position="746"/>
        <end position="769"/>
    </location>
</feature>
<feature type="compositionally biased region" description="Basic and acidic residues" evidence="1">
    <location>
        <begin position="785"/>
        <end position="799"/>
    </location>
</feature>
<feature type="compositionally biased region" description="Polar residues" evidence="1">
    <location>
        <begin position="847"/>
        <end position="884"/>
    </location>
</feature>
<feature type="compositionally biased region" description="Polar residues" evidence="1">
    <location>
        <begin position="914"/>
        <end position="926"/>
    </location>
</feature>
<feature type="splice variant" id="VSP_030074" description="In isoform 3." evidence="3 4">
    <location>
        <begin position="1"/>
        <end position="62"/>
    </location>
</feature>
<feature type="splice variant" id="VSP_030075" description="In isoform 2 and isoform 3." evidence="2 3 4">
    <original>T</original>
    <variation>N</variation>
    <location>
        <position position="863"/>
    </location>
</feature>
<feature type="splice variant" id="VSP_030076" description="In isoform 2 and isoform 3." evidence="2 3 4">
    <location>
        <begin position="864"/>
        <end position="926"/>
    </location>
</feature>
<feature type="sequence conflict" description="In Ref. 3; AAH99949." evidence="5" ref="3">
    <original>T</original>
    <variation>A</variation>
    <location>
        <position position="122"/>
    </location>
</feature>
<feature type="sequence conflict" description="In Ref. 3; AAI00573/AAI00574." evidence="5" ref="3">
    <original>R</original>
    <variation>G</variation>
    <location>
        <position position="167"/>
    </location>
</feature>
<feature type="sequence conflict" description="In Ref. 2; BAC26735." evidence="5" ref="2">
    <original>P</original>
    <variation>T</variation>
    <location>
        <position position="235"/>
    </location>
</feature>
<feature type="sequence conflict" description="In Ref. 3; AAH99949." evidence="5" ref="3">
    <original>S</original>
    <variation>L</variation>
    <location>
        <position position="526"/>
    </location>
</feature>
<feature type="sequence conflict" description="In Ref. 3; AAI00573/AAI00574." evidence="5" ref="3">
    <original>V</original>
    <variation>A</variation>
    <location>
        <position position="671"/>
    </location>
</feature>
<name>STOX2_MOUSE</name>
<keyword id="KW-0025">Alternative splicing</keyword>
<keyword id="KW-1185">Reference proteome</keyword>
<sequence>MKKTRSTTLRRAWPSSDFSDRASDRMRSRSEKDYRLHKRFPAAFAPQASRGYMTSGDVSPISMSPISQSQFIPLGEILCLAISAMNSARKPVTQEALMEHLTTCFPGVPTPSQEILRHTLNTLVRERKIYPTPDGYFIVTPQTYFITPSLIRTNSKWYHLDERVPDRSQCTSPQPGTITPSASGCVRERTLPRKHCDSCHCCREDVHSMHASTLQRKSAKDCKDPYCPPPLCQVPPTEKSKSTINFSYKTETLSKPKDGEKQSKKFGLKLFRLSFKKDKTKQLANFSAQFPPEEWPLRDEDTPTTIPREVEMEIIRRINPDLTVENVMRHTALMKKLEEEKAHRSKAGSSAHHSGRSKKSRTHRKSHGKSRSHSKTRVSKGDPSDGSHLDIPGEREYEFCDPLTRAPREGCFIIEHKGDNFIMHSNTNVIESHFPMTPEWDVSGELAKRRTEMPFPEPSRGSSHSKVHRSHSHTQDRRSRNERSNKAKERSRSMDNSKGPLGASSLGTPEDLAEGCSQDDQTPSQSYIDDSTLRPAQTIGHQRAHIPSASYKEVCIPEIVGGSKEPSSACSLLEPGKTPESMPSYGELSPCPAKTAVDDYFQCNTSSETVLTAPSPLGKNKEDHDTLTLVEGVKKLSPSERQTPHSSREPVGHKEESPKGPGGGPAASGGVAEGLANGRLVQHHSAEPSSLDKRKEIFSKDTLFKPLHSTLSVNSYHKSSLSLLKSHPKSPVDTLPGRCEKLEPSLGTSAAQAMPPSQRQQEPGGNQEASFDYYNVSDDDDSEEGANKNAEEEKNRDDVGTMQWLLEREKERDLQRKFEKNLTLLTPKETDSSSNQRATHSARLDSMDSSSITVDSGFNSPRTRESLASNTSSIVESNRRQNPALSPAHGGAGPTFNFRASTDPPTSEAEKLQKPSNCLQASVTSV</sequence>
<evidence type="ECO:0000256" key="1">
    <source>
        <dbReference type="SAM" id="MobiDB-lite"/>
    </source>
</evidence>
<evidence type="ECO:0000303" key="2">
    <source>
    </source>
</evidence>
<evidence type="ECO:0000303" key="3">
    <source>
    </source>
</evidence>
<evidence type="ECO:0000303" key="4">
    <source>
    </source>
</evidence>
<evidence type="ECO:0000305" key="5"/>
<protein>
    <recommendedName>
        <fullName>Storkhead-box protein 2</fullName>
    </recommendedName>
</protein>
<comment type="alternative products">
    <event type="alternative splicing"/>
    <isoform>
        <id>Q499E5-1</id>
        <name>1</name>
        <sequence type="displayed"/>
    </isoform>
    <isoform>
        <id>Q499E5-2</id>
        <name>2</name>
        <sequence type="described" ref="VSP_030075 VSP_030076"/>
    </isoform>
    <isoform>
        <id>Q499E5-3</id>
        <name>3</name>
        <sequence type="described" ref="VSP_030074 VSP_030075 VSP_030076"/>
    </isoform>
</comment>
<comment type="sequence caution" evidence="5">
    <conflict type="erroneous initiation">
        <sequence resource="EMBL-CDS" id="BAC98156"/>
    </conflict>
</comment>
<reference key="1">
    <citation type="journal article" date="2003" name="DNA Res.">
        <title>Prediction of the coding sequences of mouse homologues of KIAA gene: III. The complete nucleotide sequences of 500 mouse KIAA-homologous cDNAs identified by screening of terminal sequences of cDNA clones randomly sampled from size-fractionated libraries.</title>
        <authorList>
            <person name="Okazaki N."/>
            <person name="Kikuno R."/>
            <person name="Ohara R."/>
            <person name="Inamoto S."/>
            <person name="Koseki H."/>
            <person name="Hiraoka S."/>
            <person name="Saga Y."/>
            <person name="Nagase T."/>
            <person name="Ohara O."/>
            <person name="Koga H."/>
        </authorList>
    </citation>
    <scope>NUCLEOTIDE SEQUENCE [LARGE SCALE MRNA] (ISOFORM 2)</scope>
    <source>
        <tissue>Embryonic tail</tissue>
    </source>
</reference>
<reference key="2">
    <citation type="journal article" date="2005" name="Science">
        <title>The transcriptional landscape of the mammalian genome.</title>
        <authorList>
            <person name="Carninci P."/>
            <person name="Kasukawa T."/>
            <person name="Katayama S."/>
            <person name="Gough J."/>
            <person name="Frith M.C."/>
            <person name="Maeda N."/>
            <person name="Oyama R."/>
            <person name="Ravasi T."/>
            <person name="Lenhard B."/>
            <person name="Wells C."/>
            <person name="Kodzius R."/>
            <person name="Shimokawa K."/>
            <person name="Bajic V.B."/>
            <person name="Brenner S.E."/>
            <person name="Batalov S."/>
            <person name="Forrest A.R."/>
            <person name="Zavolan M."/>
            <person name="Davis M.J."/>
            <person name="Wilming L.G."/>
            <person name="Aidinis V."/>
            <person name="Allen J.E."/>
            <person name="Ambesi-Impiombato A."/>
            <person name="Apweiler R."/>
            <person name="Aturaliya R.N."/>
            <person name="Bailey T.L."/>
            <person name="Bansal M."/>
            <person name="Baxter L."/>
            <person name="Beisel K.W."/>
            <person name="Bersano T."/>
            <person name="Bono H."/>
            <person name="Chalk A.M."/>
            <person name="Chiu K.P."/>
            <person name="Choudhary V."/>
            <person name="Christoffels A."/>
            <person name="Clutterbuck D.R."/>
            <person name="Crowe M.L."/>
            <person name="Dalla E."/>
            <person name="Dalrymple B.P."/>
            <person name="de Bono B."/>
            <person name="Della Gatta G."/>
            <person name="di Bernardo D."/>
            <person name="Down T."/>
            <person name="Engstrom P."/>
            <person name="Fagiolini M."/>
            <person name="Faulkner G."/>
            <person name="Fletcher C.F."/>
            <person name="Fukushima T."/>
            <person name="Furuno M."/>
            <person name="Futaki S."/>
            <person name="Gariboldi M."/>
            <person name="Georgii-Hemming P."/>
            <person name="Gingeras T.R."/>
            <person name="Gojobori T."/>
            <person name="Green R.E."/>
            <person name="Gustincich S."/>
            <person name="Harbers M."/>
            <person name="Hayashi Y."/>
            <person name="Hensch T.K."/>
            <person name="Hirokawa N."/>
            <person name="Hill D."/>
            <person name="Huminiecki L."/>
            <person name="Iacono M."/>
            <person name="Ikeo K."/>
            <person name="Iwama A."/>
            <person name="Ishikawa T."/>
            <person name="Jakt M."/>
            <person name="Kanapin A."/>
            <person name="Katoh M."/>
            <person name="Kawasawa Y."/>
            <person name="Kelso J."/>
            <person name="Kitamura H."/>
            <person name="Kitano H."/>
            <person name="Kollias G."/>
            <person name="Krishnan S.P."/>
            <person name="Kruger A."/>
            <person name="Kummerfeld S.K."/>
            <person name="Kurochkin I.V."/>
            <person name="Lareau L.F."/>
            <person name="Lazarevic D."/>
            <person name="Lipovich L."/>
            <person name="Liu J."/>
            <person name="Liuni S."/>
            <person name="McWilliam S."/>
            <person name="Madan Babu M."/>
            <person name="Madera M."/>
            <person name="Marchionni L."/>
            <person name="Matsuda H."/>
            <person name="Matsuzawa S."/>
            <person name="Miki H."/>
            <person name="Mignone F."/>
            <person name="Miyake S."/>
            <person name="Morris K."/>
            <person name="Mottagui-Tabar S."/>
            <person name="Mulder N."/>
            <person name="Nakano N."/>
            <person name="Nakauchi H."/>
            <person name="Ng P."/>
            <person name="Nilsson R."/>
            <person name="Nishiguchi S."/>
            <person name="Nishikawa S."/>
            <person name="Nori F."/>
            <person name="Ohara O."/>
            <person name="Okazaki Y."/>
            <person name="Orlando V."/>
            <person name="Pang K.C."/>
            <person name="Pavan W.J."/>
            <person name="Pavesi G."/>
            <person name="Pesole G."/>
            <person name="Petrovsky N."/>
            <person name="Piazza S."/>
            <person name="Reed J."/>
            <person name="Reid J.F."/>
            <person name="Ring B.Z."/>
            <person name="Ringwald M."/>
            <person name="Rost B."/>
            <person name="Ruan Y."/>
            <person name="Salzberg S.L."/>
            <person name="Sandelin A."/>
            <person name="Schneider C."/>
            <person name="Schoenbach C."/>
            <person name="Sekiguchi K."/>
            <person name="Semple C.A."/>
            <person name="Seno S."/>
            <person name="Sessa L."/>
            <person name="Sheng Y."/>
            <person name="Shibata Y."/>
            <person name="Shimada H."/>
            <person name="Shimada K."/>
            <person name="Silva D."/>
            <person name="Sinclair B."/>
            <person name="Sperling S."/>
            <person name="Stupka E."/>
            <person name="Sugiura K."/>
            <person name="Sultana R."/>
            <person name="Takenaka Y."/>
            <person name="Taki K."/>
            <person name="Tammoja K."/>
            <person name="Tan S.L."/>
            <person name="Tang S."/>
            <person name="Taylor M.S."/>
            <person name="Tegner J."/>
            <person name="Teichmann S.A."/>
            <person name="Ueda H.R."/>
            <person name="van Nimwegen E."/>
            <person name="Verardo R."/>
            <person name="Wei C.L."/>
            <person name="Yagi K."/>
            <person name="Yamanishi H."/>
            <person name="Zabarovsky E."/>
            <person name="Zhu S."/>
            <person name="Zimmer A."/>
            <person name="Hide W."/>
            <person name="Bult C."/>
            <person name="Grimmond S.M."/>
            <person name="Teasdale R.D."/>
            <person name="Liu E.T."/>
            <person name="Brusic V."/>
            <person name="Quackenbush J."/>
            <person name="Wahlestedt C."/>
            <person name="Mattick J.S."/>
            <person name="Hume D.A."/>
            <person name="Kai C."/>
            <person name="Sasaki D."/>
            <person name="Tomaru Y."/>
            <person name="Fukuda S."/>
            <person name="Kanamori-Katayama M."/>
            <person name="Suzuki M."/>
            <person name="Aoki J."/>
            <person name="Arakawa T."/>
            <person name="Iida J."/>
            <person name="Imamura K."/>
            <person name="Itoh M."/>
            <person name="Kato T."/>
            <person name="Kawaji H."/>
            <person name="Kawagashira N."/>
            <person name="Kawashima T."/>
            <person name="Kojima M."/>
            <person name="Kondo S."/>
            <person name="Konno H."/>
            <person name="Nakano K."/>
            <person name="Ninomiya N."/>
            <person name="Nishio T."/>
            <person name="Okada M."/>
            <person name="Plessy C."/>
            <person name="Shibata K."/>
            <person name="Shiraki T."/>
            <person name="Suzuki S."/>
            <person name="Tagami M."/>
            <person name="Waki K."/>
            <person name="Watahiki A."/>
            <person name="Okamura-Oho Y."/>
            <person name="Suzuki H."/>
            <person name="Kawai J."/>
            <person name="Hayashizaki Y."/>
        </authorList>
    </citation>
    <scope>NUCLEOTIDE SEQUENCE [LARGE SCALE MRNA] (ISOFORM 3)</scope>
    <source>
        <strain>C57BL/6J</strain>
        <tissue>Hypothalamus</tissue>
        <tissue>Testis</tissue>
    </source>
</reference>
<reference key="3">
    <citation type="journal article" date="2004" name="Genome Res.">
        <title>The status, quality, and expansion of the NIH full-length cDNA project: the Mammalian Gene Collection (MGC).</title>
        <authorList>
            <consortium name="The MGC Project Team"/>
        </authorList>
    </citation>
    <scope>NUCLEOTIDE SEQUENCE [LARGE SCALE MRNA] (ISOFORMS 1 AND 3)</scope>
    <source>
        <strain>CD-1</strain>
        <tissue>Brain</tissue>
        <tissue>Neural stem cell</tissue>
    </source>
</reference>
<accession>Q499E5</accession>
<accession>B2RR59</accession>
<accession>Q3TRF0</accession>
<accession>Q497F9</accession>
<accession>Q6ZPS3</accession>
<accession>Q8CDI1</accession>